<proteinExistence type="inferred from homology"/>
<feature type="chain" id="PRO_1000015646" description="Elongation factor Tu">
    <location>
        <begin position="1"/>
        <end position="395"/>
    </location>
</feature>
<feature type="domain" description="tr-type G">
    <location>
        <begin position="10"/>
        <end position="205"/>
    </location>
</feature>
<feature type="region of interest" description="G1" evidence="1">
    <location>
        <begin position="19"/>
        <end position="26"/>
    </location>
</feature>
<feature type="region of interest" description="G2" evidence="1">
    <location>
        <begin position="60"/>
        <end position="64"/>
    </location>
</feature>
<feature type="region of interest" description="G3" evidence="1">
    <location>
        <begin position="81"/>
        <end position="84"/>
    </location>
</feature>
<feature type="region of interest" description="G4" evidence="1">
    <location>
        <begin position="136"/>
        <end position="139"/>
    </location>
</feature>
<feature type="region of interest" description="G5" evidence="1">
    <location>
        <begin position="174"/>
        <end position="176"/>
    </location>
</feature>
<feature type="binding site" evidence="2">
    <location>
        <begin position="19"/>
        <end position="26"/>
    </location>
    <ligand>
        <name>GTP</name>
        <dbReference type="ChEBI" id="CHEBI:37565"/>
    </ligand>
</feature>
<feature type="binding site" evidence="2">
    <location>
        <position position="26"/>
    </location>
    <ligand>
        <name>Mg(2+)</name>
        <dbReference type="ChEBI" id="CHEBI:18420"/>
    </ligand>
</feature>
<feature type="binding site" evidence="2">
    <location>
        <begin position="81"/>
        <end position="85"/>
    </location>
    <ligand>
        <name>GTP</name>
        <dbReference type="ChEBI" id="CHEBI:37565"/>
    </ligand>
</feature>
<feature type="binding site" evidence="2">
    <location>
        <begin position="136"/>
        <end position="139"/>
    </location>
    <ligand>
        <name>GTP</name>
        <dbReference type="ChEBI" id="CHEBI:37565"/>
    </ligand>
</feature>
<sequence length="395" mass="43021">MAKENFDRSKPHVNVGTIGHVDHGKTTLTAAITKVLADKGLAEKRDFSQIDNAPEEKERGITINTSHVEYATATRHYAHVDCPGHADYVKNMVTGAAQMDGAILVVAATDGPMPQTREHILLARQVGVPAMVVFMNKVDLVDDPELLELVEMEIRELLSFYNFPGDTMSIIKGSALGGLNADPKWVATIEELMNAVDNDIPIPPRLTDQPFLMPVEDVFSITGRGTVATGRIERGVINSGEGVDIIGFGAENLKSTVTGVEMFRKILDRGEAGDNVGLLLRGIEKESIKRGMVICKPGSVKPHSEFKGEIYVLSKEEGGRHTPFFNKYRPQFYMRTTDVTGEIELPAGTEMVMPGDNITITVKLIAAIALEKGLRFAIREGGRTVGAGQVTEILK</sequence>
<comment type="function">
    <text evidence="2">GTP hydrolase that promotes the GTP-dependent binding of aminoacyl-tRNA to the A-site of ribosomes during protein biosynthesis.</text>
</comment>
<comment type="catalytic activity">
    <reaction evidence="2">
        <text>GTP + H2O = GDP + phosphate + H(+)</text>
        <dbReference type="Rhea" id="RHEA:19669"/>
        <dbReference type="ChEBI" id="CHEBI:15377"/>
        <dbReference type="ChEBI" id="CHEBI:15378"/>
        <dbReference type="ChEBI" id="CHEBI:37565"/>
        <dbReference type="ChEBI" id="CHEBI:43474"/>
        <dbReference type="ChEBI" id="CHEBI:58189"/>
        <dbReference type="EC" id="3.6.5.3"/>
    </reaction>
    <physiologicalReaction direction="left-to-right" evidence="2">
        <dbReference type="Rhea" id="RHEA:19670"/>
    </physiologicalReaction>
</comment>
<comment type="subunit">
    <text evidence="2">Monomer.</text>
</comment>
<comment type="subcellular location">
    <subcellularLocation>
        <location evidence="2">Cytoplasm</location>
    </subcellularLocation>
</comment>
<comment type="similarity">
    <text evidence="2">Belongs to the TRAFAC class translation factor GTPase superfamily. Classic translation factor GTPase family. EF-Tu/EF-1A subfamily.</text>
</comment>
<gene>
    <name evidence="2" type="primary">tuf</name>
    <name type="ordered locus">CHU_3175</name>
</gene>
<reference key="1">
    <citation type="journal article" date="2007" name="Appl. Environ. Microbiol.">
        <title>Genome sequence of the cellulolytic gliding bacterium Cytophaga hutchinsonii.</title>
        <authorList>
            <person name="Xie G."/>
            <person name="Bruce D.C."/>
            <person name="Challacombe J.F."/>
            <person name="Chertkov O."/>
            <person name="Detter J.C."/>
            <person name="Gilna P."/>
            <person name="Han C.S."/>
            <person name="Lucas S."/>
            <person name="Misra M."/>
            <person name="Myers G.L."/>
            <person name="Richardson P."/>
            <person name="Tapia R."/>
            <person name="Thayer N."/>
            <person name="Thompson L.S."/>
            <person name="Brettin T.S."/>
            <person name="Henrissat B."/>
            <person name="Wilson D.B."/>
            <person name="McBride M.J."/>
        </authorList>
    </citation>
    <scope>NUCLEOTIDE SEQUENCE [LARGE SCALE GENOMIC DNA]</scope>
    <source>
        <strain>ATCC 33406 / DSM 1761 / JCM 20678 / CIP 103989 / IAM 12607 / NBRC 15051 / NCIMB 9469 / D465</strain>
    </source>
</reference>
<organism>
    <name type="scientific">Cytophaga hutchinsonii (strain ATCC 33406 / DSM 1761 / CIP 103989 / NBRC 15051 / NCIMB 9469 / D465)</name>
    <dbReference type="NCBI Taxonomy" id="269798"/>
    <lineage>
        <taxon>Bacteria</taxon>
        <taxon>Pseudomonadati</taxon>
        <taxon>Bacteroidota</taxon>
        <taxon>Cytophagia</taxon>
        <taxon>Cytophagales</taxon>
        <taxon>Cytophagaceae</taxon>
        <taxon>Cytophaga</taxon>
    </lineage>
</organism>
<dbReference type="EC" id="3.6.5.3" evidence="2"/>
<dbReference type="EMBL" id="CP000383">
    <property type="protein sequence ID" value="ABG60415.1"/>
    <property type="molecule type" value="Genomic_DNA"/>
</dbReference>
<dbReference type="RefSeq" id="WP_011586525.1">
    <property type="nucleotide sequence ID" value="NC_008255.1"/>
</dbReference>
<dbReference type="SMR" id="Q11Q98"/>
<dbReference type="STRING" id="269798.CHU_3175"/>
<dbReference type="KEGG" id="chu:CHU_3175"/>
<dbReference type="eggNOG" id="COG0050">
    <property type="taxonomic scope" value="Bacteria"/>
</dbReference>
<dbReference type="HOGENOM" id="CLU_007265_0_1_10"/>
<dbReference type="OrthoDB" id="9804504at2"/>
<dbReference type="Proteomes" id="UP000001822">
    <property type="component" value="Chromosome"/>
</dbReference>
<dbReference type="GO" id="GO:0005829">
    <property type="term" value="C:cytosol"/>
    <property type="evidence" value="ECO:0007669"/>
    <property type="project" value="TreeGrafter"/>
</dbReference>
<dbReference type="GO" id="GO:0005525">
    <property type="term" value="F:GTP binding"/>
    <property type="evidence" value="ECO:0007669"/>
    <property type="project" value="UniProtKB-UniRule"/>
</dbReference>
<dbReference type="GO" id="GO:0003924">
    <property type="term" value="F:GTPase activity"/>
    <property type="evidence" value="ECO:0007669"/>
    <property type="project" value="InterPro"/>
</dbReference>
<dbReference type="GO" id="GO:0003746">
    <property type="term" value="F:translation elongation factor activity"/>
    <property type="evidence" value="ECO:0007669"/>
    <property type="project" value="UniProtKB-UniRule"/>
</dbReference>
<dbReference type="CDD" id="cd01884">
    <property type="entry name" value="EF_Tu"/>
    <property type="match status" value="1"/>
</dbReference>
<dbReference type="CDD" id="cd03697">
    <property type="entry name" value="EFTU_II"/>
    <property type="match status" value="1"/>
</dbReference>
<dbReference type="CDD" id="cd03707">
    <property type="entry name" value="EFTU_III"/>
    <property type="match status" value="1"/>
</dbReference>
<dbReference type="FunFam" id="2.40.30.10:FF:000001">
    <property type="entry name" value="Elongation factor Tu"/>
    <property type="match status" value="1"/>
</dbReference>
<dbReference type="FunFam" id="3.40.50.300:FF:000003">
    <property type="entry name" value="Elongation factor Tu"/>
    <property type="match status" value="1"/>
</dbReference>
<dbReference type="Gene3D" id="3.40.50.300">
    <property type="entry name" value="P-loop containing nucleotide triphosphate hydrolases"/>
    <property type="match status" value="1"/>
</dbReference>
<dbReference type="Gene3D" id="2.40.30.10">
    <property type="entry name" value="Translation factors"/>
    <property type="match status" value="2"/>
</dbReference>
<dbReference type="HAMAP" id="MF_00118_B">
    <property type="entry name" value="EF_Tu_B"/>
    <property type="match status" value="1"/>
</dbReference>
<dbReference type="InterPro" id="IPR041709">
    <property type="entry name" value="EF-Tu_GTP-bd"/>
</dbReference>
<dbReference type="InterPro" id="IPR050055">
    <property type="entry name" value="EF-Tu_GTPase"/>
</dbReference>
<dbReference type="InterPro" id="IPR004161">
    <property type="entry name" value="EFTu-like_2"/>
</dbReference>
<dbReference type="InterPro" id="IPR033720">
    <property type="entry name" value="EFTU_2"/>
</dbReference>
<dbReference type="InterPro" id="IPR031157">
    <property type="entry name" value="G_TR_CS"/>
</dbReference>
<dbReference type="InterPro" id="IPR027417">
    <property type="entry name" value="P-loop_NTPase"/>
</dbReference>
<dbReference type="InterPro" id="IPR005225">
    <property type="entry name" value="Small_GTP-bd"/>
</dbReference>
<dbReference type="InterPro" id="IPR000795">
    <property type="entry name" value="T_Tr_GTP-bd_dom"/>
</dbReference>
<dbReference type="InterPro" id="IPR009000">
    <property type="entry name" value="Transl_B-barrel_sf"/>
</dbReference>
<dbReference type="InterPro" id="IPR009001">
    <property type="entry name" value="Transl_elong_EF1A/Init_IF2_C"/>
</dbReference>
<dbReference type="InterPro" id="IPR004541">
    <property type="entry name" value="Transl_elong_EFTu/EF1A_bac/org"/>
</dbReference>
<dbReference type="InterPro" id="IPR004160">
    <property type="entry name" value="Transl_elong_EFTu/EF1A_C"/>
</dbReference>
<dbReference type="NCBIfam" id="TIGR00485">
    <property type="entry name" value="EF-Tu"/>
    <property type="match status" value="1"/>
</dbReference>
<dbReference type="NCBIfam" id="NF000766">
    <property type="entry name" value="PRK00049.1"/>
    <property type="match status" value="1"/>
</dbReference>
<dbReference type="NCBIfam" id="NF009372">
    <property type="entry name" value="PRK12735.1"/>
    <property type="match status" value="1"/>
</dbReference>
<dbReference type="NCBIfam" id="NF009373">
    <property type="entry name" value="PRK12736.1"/>
    <property type="match status" value="1"/>
</dbReference>
<dbReference type="NCBIfam" id="TIGR00231">
    <property type="entry name" value="small_GTP"/>
    <property type="match status" value="1"/>
</dbReference>
<dbReference type="PANTHER" id="PTHR43721:SF22">
    <property type="entry name" value="ELONGATION FACTOR TU, MITOCHONDRIAL"/>
    <property type="match status" value="1"/>
</dbReference>
<dbReference type="PANTHER" id="PTHR43721">
    <property type="entry name" value="ELONGATION FACTOR TU-RELATED"/>
    <property type="match status" value="1"/>
</dbReference>
<dbReference type="Pfam" id="PF00009">
    <property type="entry name" value="GTP_EFTU"/>
    <property type="match status" value="1"/>
</dbReference>
<dbReference type="Pfam" id="PF03144">
    <property type="entry name" value="GTP_EFTU_D2"/>
    <property type="match status" value="1"/>
</dbReference>
<dbReference type="Pfam" id="PF03143">
    <property type="entry name" value="GTP_EFTU_D3"/>
    <property type="match status" value="1"/>
</dbReference>
<dbReference type="PRINTS" id="PR00315">
    <property type="entry name" value="ELONGATNFCT"/>
</dbReference>
<dbReference type="SUPFAM" id="SSF50465">
    <property type="entry name" value="EF-Tu/eEF-1alpha/eIF2-gamma C-terminal domain"/>
    <property type="match status" value="1"/>
</dbReference>
<dbReference type="SUPFAM" id="SSF52540">
    <property type="entry name" value="P-loop containing nucleoside triphosphate hydrolases"/>
    <property type="match status" value="1"/>
</dbReference>
<dbReference type="SUPFAM" id="SSF50447">
    <property type="entry name" value="Translation proteins"/>
    <property type="match status" value="1"/>
</dbReference>
<dbReference type="PROSITE" id="PS00301">
    <property type="entry name" value="G_TR_1"/>
    <property type="match status" value="1"/>
</dbReference>
<dbReference type="PROSITE" id="PS51722">
    <property type="entry name" value="G_TR_2"/>
    <property type="match status" value="1"/>
</dbReference>
<protein>
    <recommendedName>
        <fullName evidence="2">Elongation factor Tu</fullName>
        <shortName evidence="2">EF-Tu</shortName>
        <ecNumber evidence="2">3.6.5.3</ecNumber>
    </recommendedName>
</protein>
<name>EFTU_CYTH3</name>
<accession>Q11Q98</accession>
<evidence type="ECO:0000250" key="1"/>
<evidence type="ECO:0000255" key="2">
    <source>
        <dbReference type="HAMAP-Rule" id="MF_00118"/>
    </source>
</evidence>
<keyword id="KW-0963">Cytoplasm</keyword>
<keyword id="KW-0251">Elongation factor</keyword>
<keyword id="KW-0342">GTP-binding</keyword>
<keyword id="KW-0378">Hydrolase</keyword>
<keyword id="KW-0460">Magnesium</keyword>
<keyword id="KW-0479">Metal-binding</keyword>
<keyword id="KW-0547">Nucleotide-binding</keyword>
<keyword id="KW-0648">Protein biosynthesis</keyword>
<keyword id="KW-1185">Reference proteome</keyword>